<evidence type="ECO:0000255" key="1">
    <source>
        <dbReference type="HAMAP-Rule" id="MF_04083"/>
    </source>
</evidence>
<evidence type="ECO:0000256" key="2">
    <source>
        <dbReference type="SAM" id="MobiDB-lite"/>
    </source>
</evidence>
<evidence type="ECO:0007829" key="3">
    <source>
        <dbReference type="PDB" id="1J8Z"/>
    </source>
</evidence>
<accession>P12488</accession>
<dbReference type="EMBL" id="M21098">
    <property type="protein sequence ID" value="AAA44221.1"/>
    <property type="molecule type" value="Genomic_RNA"/>
</dbReference>
<dbReference type="PIR" id="A31667">
    <property type="entry name" value="VCLJBR"/>
</dbReference>
<dbReference type="PDB" id="1IM7">
    <property type="method" value="NMR"/>
    <property type="chains" value="A=591-603"/>
</dbReference>
<dbReference type="PDB" id="1J8N">
    <property type="method" value="NMR"/>
    <property type="chains" value="A=591-603"/>
</dbReference>
<dbReference type="PDB" id="1J8Z">
    <property type="method" value="NMR"/>
    <property type="chains" value="A=591-603"/>
</dbReference>
<dbReference type="PDB" id="1J9V">
    <property type="method" value="NMR"/>
    <property type="chains" value="A=591-603"/>
</dbReference>
<dbReference type="PDB" id="1JAA">
    <property type="method" value="NMR"/>
    <property type="chains" value="A=591-603"/>
</dbReference>
<dbReference type="PDB" id="1JAR">
    <property type="method" value="NMR"/>
    <property type="chains" value="A=591-603"/>
</dbReference>
<dbReference type="PDB" id="1JC8">
    <property type="method" value="NMR"/>
    <property type="chains" value="A=591-603"/>
</dbReference>
<dbReference type="PDB" id="1JCP">
    <property type="method" value="NMR"/>
    <property type="chains" value="A=591-603"/>
</dbReference>
<dbReference type="PDBsum" id="1IM7"/>
<dbReference type="PDBsum" id="1J8N"/>
<dbReference type="PDBsum" id="1J8Z"/>
<dbReference type="PDBsum" id="1J9V"/>
<dbReference type="PDBsum" id="1JAA"/>
<dbReference type="PDBsum" id="1JAR"/>
<dbReference type="PDBsum" id="1JC8"/>
<dbReference type="PDBsum" id="1JCP"/>
<dbReference type="BMRB" id="P12488"/>
<dbReference type="SMR" id="P12488"/>
<dbReference type="DrugBank" id="DB03320">
    <property type="generic name" value="3-Amino-Alanine"/>
</dbReference>
<dbReference type="DrugBank" id="DB02780">
    <property type="generic name" value="Beta-3-Cysteine"/>
</dbReference>
<dbReference type="DrugBank" id="DB02904">
    <property type="generic name" value="Beta-3-Serine"/>
</dbReference>
<dbReference type="DrugBank" id="DB11796">
    <property type="generic name" value="Fostemsavir"/>
</dbReference>
<dbReference type="DrugBank" id="DB03817">
    <property type="generic name" value="L-2,4-diaminobutyric acid"/>
</dbReference>
<dbReference type="GlyCosmos" id="P12488">
    <property type="glycosylation" value="28 sites, No reported glycans"/>
</dbReference>
<dbReference type="Reactome" id="R-HSA-5621480">
    <property type="pathway name" value="Dectin-2 family"/>
</dbReference>
<dbReference type="EvolutionaryTrace" id="P12488"/>
<dbReference type="GO" id="GO:0044175">
    <property type="term" value="C:host cell endosome membrane"/>
    <property type="evidence" value="ECO:0007669"/>
    <property type="project" value="UniProtKB-SubCell"/>
</dbReference>
<dbReference type="GO" id="GO:0020002">
    <property type="term" value="C:host cell plasma membrane"/>
    <property type="evidence" value="ECO:0007669"/>
    <property type="project" value="UniProtKB-SubCell"/>
</dbReference>
<dbReference type="GO" id="GO:0016020">
    <property type="term" value="C:membrane"/>
    <property type="evidence" value="ECO:0007669"/>
    <property type="project" value="UniProtKB-UniRule"/>
</dbReference>
<dbReference type="GO" id="GO:0019031">
    <property type="term" value="C:viral envelope"/>
    <property type="evidence" value="ECO:0007669"/>
    <property type="project" value="UniProtKB-KW"/>
</dbReference>
<dbReference type="GO" id="GO:0055036">
    <property type="term" value="C:virion membrane"/>
    <property type="evidence" value="ECO:0007669"/>
    <property type="project" value="UniProtKB-SubCell"/>
</dbReference>
<dbReference type="GO" id="GO:0005198">
    <property type="term" value="F:structural molecule activity"/>
    <property type="evidence" value="ECO:0007669"/>
    <property type="project" value="UniProtKB-UniRule"/>
</dbReference>
<dbReference type="GO" id="GO:0075512">
    <property type="term" value="P:clathrin-dependent endocytosis of virus by host cell"/>
    <property type="evidence" value="ECO:0007669"/>
    <property type="project" value="UniProtKB-UniRule"/>
</dbReference>
<dbReference type="GO" id="GO:0039654">
    <property type="term" value="P:fusion of virus membrane with host endosome membrane"/>
    <property type="evidence" value="ECO:0007669"/>
    <property type="project" value="UniProtKB-UniRule"/>
</dbReference>
<dbReference type="GO" id="GO:0019064">
    <property type="term" value="P:fusion of virus membrane with host plasma membrane"/>
    <property type="evidence" value="ECO:0007669"/>
    <property type="project" value="UniProtKB-UniRule"/>
</dbReference>
<dbReference type="GO" id="GO:1903908">
    <property type="term" value="P:positive regulation of plasma membrane raft polarization"/>
    <property type="evidence" value="ECO:0007669"/>
    <property type="project" value="UniProtKB-UniRule"/>
</dbReference>
<dbReference type="GO" id="GO:1903911">
    <property type="term" value="P:positive regulation of receptor clustering"/>
    <property type="evidence" value="ECO:0007669"/>
    <property type="project" value="UniProtKB-UniRule"/>
</dbReference>
<dbReference type="GO" id="GO:0019082">
    <property type="term" value="P:viral protein processing"/>
    <property type="evidence" value="ECO:0007669"/>
    <property type="project" value="UniProtKB-UniRule"/>
</dbReference>
<dbReference type="GO" id="GO:0019062">
    <property type="term" value="P:virion attachment to host cell"/>
    <property type="evidence" value="ECO:0007669"/>
    <property type="project" value="UniProtKB-UniRule"/>
</dbReference>
<dbReference type="CDD" id="cd09909">
    <property type="entry name" value="HIV-1-like_HR1-HR2"/>
    <property type="match status" value="1"/>
</dbReference>
<dbReference type="FunFam" id="1.10.287.210:FF:000001">
    <property type="entry name" value="Envelope glycoprotein gp160"/>
    <property type="match status" value="1"/>
</dbReference>
<dbReference type="FunFam" id="1.20.5.490:FF:000001">
    <property type="entry name" value="Envelope glycoprotein gp160"/>
    <property type="match status" value="1"/>
</dbReference>
<dbReference type="FunFam" id="2.170.40.20:FF:000001">
    <property type="entry name" value="Envelope glycoprotein gp160"/>
    <property type="match status" value="1"/>
</dbReference>
<dbReference type="FunFam" id="2.170.40.20:FF:000003">
    <property type="entry name" value="Envelope glycoprotein gp160"/>
    <property type="match status" value="1"/>
</dbReference>
<dbReference type="Gene3D" id="1.10.287.210">
    <property type="match status" value="1"/>
</dbReference>
<dbReference type="Gene3D" id="2.170.40.20">
    <property type="entry name" value="Human immunodeficiency virus 1, Gp160, envelope glycoprotein"/>
    <property type="match status" value="2"/>
</dbReference>
<dbReference type="Gene3D" id="1.20.5.490">
    <property type="entry name" value="Single helix bin"/>
    <property type="match status" value="1"/>
</dbReference>
<dbReference type="HAMAP" id="MF_04083">
    <property type="entry name" value="HIV_ENV"/>
    <property type="match status" value="1"/>
</dbReference>
<dbReference type="InterPro" id="IPR036377">
    <property type="entry name" value="Gp120_core_sf"/>
</dbReference>
<dbReference type="InterPro" id="IPR037527">
    <property type="entry name" value="Gp160"/>
</dbReference>
<dbReference type="InterPro" id="IPR000328">
    <property type="entry name" value="GP41-like"/>
</dbReference>
<dbReference type="InterPro" id="IPR000777">
    <property type="entry name" value="HIV1_Gp120"/>
</dbReference>
<dbReference type="Pfam" id="PF00516">
    <property type="entry name" value="GP120"/>
    <property type="match status" value="1"/>
</dbReference>
<dbReference type="Pfam" id="PF00517">
    <property type="entry name" value="GP41"/>
    <property type="match status" value="1"/>
</dbReference>
<dbReference type="SUPFAM" id="SSF56502">
    <property type="entry name" value="gp120 core"/>
    <property type="match status" value="2"/>
</dbReference>
<dbReference type="SUPFAM" id="SSF58069">
    <property type="entry name" value="Virus ectodomain"/>
    <property type="match status" value="1"/>
</dbReference>
<gene>
    <name evidence="1" type="primary">env</name>
</gene>
<feature type="signal peptide" evidence="1">
    <location>
        <begin position="1"/>
        <end position="32"/>
    </location>
</feature>
<feature type="chain" id="PRO_0000441239" description="Envelope glycoprotein gp160" evidence="1">
    <location>
        <begin position="33"/>
        <end position="852"/>
    </location>
</feature>
<feature type="chain" id="PRO_0000441240" description="Surface protein gp120" evidence="1">
    <location>
        <begin position="33"/>
        <end position="507"/>
    </location>
</feature>
<feature type="chain" id="PRO_0000038403" description="Transmembrane protein gp41" evidence="1">
    <location>
        <begin position="508"/>
        <end position="852"/>
    </location>
</feature>
<feature type="topological domain" description="Extracellular" evidence="1">
    <location>
        <begin position="33"/>
        <end position="680"/>
    </location>
</feature>
<feature type="transmembrane region" description="Helical" evidence="1">
    <location>
        <begin position="681"/>
        <end position="701"/>
    </location>
</feature>
<feature type="topological domain" description="Cytoplasmic" evidence="1">
    <location>
        <begin position="702"/>
        <end position="852"/>
    </location>
</feature>
<feature type="region of interest" description="V1" evidence="1">
    <location>
        <begin position="131"/>
        <end position="154"/>
    </location>
</feature>
<feature type="region of interest" description="V2" evidence="1">
    <location>
        <begin position="155"/>
        <end position="196"/>
    </location>
</feature>
<feature type="region of interest" description="V3" evidence="1">
    <location>
        <begin position="296"/>
        <end position="329"/>
    </location>
</feature>
<feature type="region of interest" description="CD4-binding loop" evidence="1">
    <location>
        <begin position="362"/>
        <end position="372"/>
    </location>
</feature>
<feature type="region of interest" description="V4" evidence="1">
    <location>
        <begin position="383"/>
        <end position="412"/>
    </location>
</feature>
<feature type="region of interest" description="V5">
    <location>
        <begin position="454"/>
        <end position="467"/>
    </location>
</feature>
<feature type="region of interest" description="V5" evidence="1">
    <location>
        <begin position="457"/>
        <end position="467"/>
    </location>
</feature>
<feature type="region of interest" description="Fusion peptide" evidence="1">
    <location>
        <begin position="508"/>
        <end position="528"/>
    </location>
</feature>
<feature type="region of interest" description="Immunosuppression" evidence="1">
    <location>
        <begin position="570"/>
        <end position="588"/>
    </location>
</feature>
<feature type="region of interest" description="MPER; binding to GalCer" evidence="1">
    <location>
        <begin position="658"/>
        <end position="679"/>
    </location>
</feature>
<feature type="region of interest" description="Disordered" evidence="2">
    <location>
        <begin position="715"/>
        <end position="741"/>
    </location>
</feature>
<feature type="coiled-coil region" evidence="1">
    <location>
        <begin position="629"/>
        <end position="663"/>
    </location>
</feature>
<feature type="short sequence motif" description="YXXL motif; contains endocytosis signal" evidence="1">
    <location>
        <begin position="708"/>
        <end position="711"/>
    </location>
</feature>
<feature type="site" description="Cleavage; by host furin" evidence="1">
    <location>
        <begin position="507"/>
        <end position="508"/>
    </location>
</feature>
<feature type="glycosylation site" description="N-linked (GlcNAc...) asparagine; by host" evidence="1">
    <location>
        <position position="49"/>
    </location>
</feature>
<feature type="glycosylation site" description="N-linked (GlcNAc...) asparagine; by host" evidence="1">
    <location>
        <position position="88"/>
    </location>
</feature>
<feature type="glycosylation site" description="N-linked (GlcNAc...) asparagine; by host" evidence="1">
    <location>
        <position position="135"/>
    </location>
</feature>
<feature type="glycosylation site" description="N-linked (GlcNAc...) asparagine; by host" evidence="1">
    <location>
        <position position="138"/>
    </location>
</feature>
<feature type="glycosylation site" description="N-linked (GlcNAc...) asparagine; by host" evidence="1">
    <location>
        <position position="154"/>
    </location>
</feature>
<feature type="glycosylation site" description="N-linked (GlcNAc...) asparagine; by host" evidence="1">
    <location>
        <position position="158"/>
    </location>
</feature>
<feature type="glycosylation site" description="N-linked (GlcNAc...) asparagine; by host" evidence="1">
    <location>
        <position position="197"/>
    </location>
</feature>
<feature type="glycosylation site" description="N-linked (GlcNAc...) asparagine; by host" evidence="1">
    <location>
        <position position="234"/>
    </location>
</feature>
<feature type="glycosylation site" description="N-linked (GlcNAc...) asparagine; by host" evidence="1">
    <location>
        <position position="241"/>
    </location>
</feature>
<feature type="glycosylation site" description="N-linked (GlcNAc...) asparagine; by host" evidence="1">
    <location>
        <position position="262"/>
    </location>
</feature>
<feature type="glycosylation site" description="N-linked (GlcNAc...) asparagine; by host" evidence="1">
    <location>
        <position position="276"/>
    </location>
</feature>
<feature type="glycosylation site" description="N-linked (GlcNAc...) asparagine; by host" evidence="1">
    <location>
        <position position="289"/>
    </location>
</feature>
<feature type="glycosylation site" description="N-linked (GlcNAc...) asparagine; by host" evidence="1">
    <location>
        <position position="295"/>
    </location>
</feature>
<feature type="glycosylation site" description="N-linked (GlcNAc...) asparagine; by host" evidence="1">
    <location>
        <position position="301"/>
    </location>
</feature>
<feature type="glycosylation site" description="N-linked (GlcNAc...) asparagine; by host" evidence="1">
    <location>
        <position position="331"/>
    </location>
</feature>
<feature type="glycosylation site" description="N-linked (GlcNAc...) asparagine; by host" evidence="1">
    <location>
        <position position="354"/>
    </location>
</feature>
<feature type="glycosylation site" description="N-linked (GlcNAc...) asparagine; by host" evidence="1">
    <location>
        <position position="360"/>
    </location>
</feature>
<feature type="glycosylation site" description="N-linked (GlcNAc...) asparagine; by host" evidence="1">
    <location>
        <position position="384"/>
    </location>
</feature>
<feature type="glycosylation site" description="N-linked (GlcNAc...) asparagine; by host" evidence="1">
    <location>
        <position position="390"/>
    </location>
</feature>
<feature type="glycosylation site" description="N-linked (GlcNAc...) asparagine; by host" evidence="1">
    <location>
        <position position="396"/>
    </location>
</feature>
<feature type="glycosylation site" description="N-linked (GlcNAc...) asparagine; by host" evidence="1">
    <location>
        <position position="400"/>
    </location>
</feature>
<feature type="glycosylation site" description="N-linked (GlcNAc...) asparagine; by host" evidence="1">
    <location>
        <position position="442"/>
    </location>
</feature>
<feature type="glycosylation site" description="N-linked (GlcNAc...) asparagine; by host" evidence="1">
    <location>
        <position position="456"/>
    </location>
</feature>
<feature type="glycosylation site" description="N-linked (GlcNAc...) asparagine; by host" evidence="1">
    <location>
        <position position="607"/>
    </location>
</feature>
<feature type="glycosylation site" description="N-linked (GlcNAc...) asparagine; by host" evidence="1">
    <location>
        <position position="612"/>
    </location>
</feature>
<feature type="glycosylation site" description="N-linked (GlcNAc...) asparagine; by host" evidence="1">
    <location>
        <position position="621"/>
    </location>
</feature>
<feature type="glycosylation site" description="N-linked (GlcNAc...) asparagine; by host" evidence="1">
    <location>
        <position position="633"/>
    </location>
</feature>
<feature type="glycosylation site" description="N-linked (GlcNAc...) asparagine; by host" evidence="1">
    <location>
        <position position="670"/>
    </location>
</feature>
<feature type="disulfide bond" evidence="1">
    <location>
        <begin position="54"/>
        <end position="74"/>
    </location>
</feature>
<feature type="disulfide bond" evidence="1">
    <location>
        <begin position="119"/>
        <end position="205"/>
    </location>
</feature>
<feature type="disulfide bond" evidence="1">
    <location>
        <begin position="126"/>
        <end position="196"/>
    </location>
</feature>
<feature type="disulfide bond" evidence="1">
    <location>
        <begin position="131"/>
        <end position="155"/>
    </location>
</feature>
<feature type="disulfide bond" evidence="1">
    <location>
        <begin position="218"/>
        <end position="247"/>
    </location>
</feature>
<feature type="disulfide bond" evidence="1">
    <location>
        <begin position="228"/>
        <end position="239"/>
    </location>
</feature>
<feature type="disulfide bond" evidence="1">
    <location>
        <begin position="296"/>
        <end position="330"/>
    </location>
</feature>
<feature type="disulfide bond" evidence="1">
    <location>
        <begin position="376"/>
        <end position="439"/>
    </location>
</feature>
<feature type="disulfide bond" evidence="1">
    <location>
        <begin position="383"/>
        <end position="412"/>
    </location>
</feature>
<feature type="disulfide bond" evidence="1">
    <location>
        <begin position="594"/>
        <end position="600"/>
    </location>
</feature>
<feature type="turn" evidence="3">
    <location>
        <begin position="595"/>
        <end position="597"/>
    </location>
</feature>
<name>ENV_HV1BN</name>
<organism>
    <name type="scientific">Human immunodeficiency virus type 1 group M subtype B (isolate BRVA)</name>
    <name type="common">HIV-1</name>
    <dbReference type="NCBI Taxonomy" id="11693"/>
    <lineage>
        <taxon>Viruses</taxon>
        <taxon>Riboviria</taxon>
        <taxon>Pararnavirae</taxon>
        <taxon>Artverviricota</taxon>
        <taxon>Revtraviricetes</taxon>
        <taxon>Ortervirales</taxon>
        <taxon>Retroviridae</taxon>
        <taxon>Orthoretrovirinae</taxon>
        <taxon>Lentivirus</taxon>
        <taxon>Human immunodeficiency virus type 1</taxon>
    </lineage>
</organism>
<organismHost>
    <name type="scientific">Homo sapiens</name>
    <name type="common">Human</name>
    <dbReference type="NCBI Taxonomy" id="9606"/>
</organismHost>
<keyword id="KW-0002">3D-structure</keyword>
<keyword id="KW-0014">AIDS</keyword>
<keyword id="KW-0053">Apoptosis</keyword>
<keyword id="KW-1165">Clathrin-mediated endocytosis of virus by host</keyword>
<keyword id="KW-0165">Cleavage on pair of basic residues</keyword>
<keyword id="KW-0175">Coiled coil</keyword>
<keyword id="KW-1015">Disulfide bond</keyword>
<keyword id="KW-1170">Fusion of virus membrane with host endosomal membrane</keyword>
<keyword id="KW-1168">Fusion of virus membrane with host membrane</keyword>
<keyword id="KW-0325">Glycoprotein</keyword>
<keyword id="KW-1032">Host cell membrane</keyword>
<keyword id="KW-1039">Host endosome</keyword>
<keyword id="KW-1043">Host membrane</keyword>
<keyword id="KW-0945">Host-virus interaction</keyword>
<keyword id="KW-0449">Lipoprotein</keyword>
<keyword id="KW-0472">Membrane</keyword>
<keyword id="KW-0564">Palmitate</keyword>
<keyword id="KW-0732">Signal</keyword>
<keyword id="KW-0812">Transmembrane</keyword>
<keyword id="KW-1133">Transmembrane helix</keyword>
<keyword id="KW-1161">Viral attachment to host cell</keyword>
<keyword id="KW-0261">Viral envelope protein</keyword>
<keyword id="KW-0899">Viral immunoevasion</keyword>
<keyword id="KW-1162">Viral penetration into host cytoplasm</keyword>
<keyword id="KW-0946">Virion</keyword>
<keyword id="KW-1164">Virus endocytosis by host</keyword>
<keyword id="KW-1160">Virus entry into host cell</keyword>
<reference key="1">
    <citation type="journal article" date="1989" name="Virology">
        <title>Biological and molecular characterization of human immunodeficiency virus (HIV-1BR) from the brain of a patient with progressive dementia.</title>
        <authorList>
            <person name="Anand R."/>
            <person name="Thayer R."/>
            <person name="Srinivasan A."/>
            <person name="Nayyar S."/>
            <person name="Gardner M."/>
            <person name="Luciw P."/>
            <person name="Dandekar S."/>
        </authorList>
    </citation>
    <scope>NUCLEOTIDE SEQUENCE [GENOMIC RNA]</scope>
</reference>
<reference key="2">
    <citation type="journal article" date="2003" name="APMIS">
        <title>Pathogens target DC-SIGN to influence their fate DC-SIGN functions as a pathogen receptor with broad specificity.</title>
        <authorList>
            <person name="Geijtenbeek T.B."/>
            <person name="van Kooyk Y."/>
        </authorList>
    </citation>
    <scope>REVIEW</scope>
</reference>
<reference key="3">
    <citation type="journal article" date="2003" name="Biochim. Biophys. Acta">
        <title>The HIV Env-mediated fusion reaction.</title>
        <authorList>
            <person name="Gallo S.A."/>
            <person name="Finnegan C.M."/>
            <person name="Viard M."/>
            <person name="Raviv Y."/>
            <person name="Dimitrov A."/>
            <person name="Rawat S.S."/>
            <person name="Puri A."/>
            <person name="Durell S."/>
            <person name="Blumenthal R."/>
        </authorList>
    </citation>
    <scope>REVIEW</scope>
</reference>
<reference key="4">
    <citation type="journal article" date="2005" name="Cell Death Differ.">
        <title>Mechanisms of apoptosis induction by the HIV-1 envelope.</title>
        <authorList>
            <person name="Perfettini J.-L."/>
            <person name="Castedo M."/>
            <person name="Roumier T."/>
            <person name="Andreau K."/>
            <person name="Nardacci R."/>
            <person name="Piacentini M."/>
            <person name="Kroemer G."/>
        </authorList>
    </citation>
    <scope>REVIEW</scope>
</reference>
<reference key="5">
    <citation type="journal article" date="2005" name="AIDS Res. Hum. Retroviruses">
        <title>V3: HIV's switch-hitter.</title>
        <authorList>
            <person name="Hartley O."/>
            <person name="Klasse P.J."/>
            <person name="Sattentau Q.J."/>
            <person name="Moore J.P."/>
        </authorList>
    </citation>
    <scope>REVIEW</scope>
</reference>
<reference key="6">
    <citation type="journal article" date="2005" name="Drugs">
        <title>Emerging drug targets for antiretroviral therapy.</title>
        <authorList>
            <person name="Reeves J.D."/>
            <person name="Piefer A.J."/>
        </authorList>
    </citation>
    <scope>REVIEW</scope>
</reference>
<reference key="7">
    <citation type="journal article" date="2006" name="EMBO J.">
        <title>HIV and the chemokine system: 10 years later.</title>
        <authorList>
            <person name="Lusso P."/>
        </authorList>
    </citation>
    <scope>REVIEW</scope>
</reference>
<proteinExistence type="evidence at protein level"/>
<protein>
    <recommendedName>
        <fullName evidence="1">Envelope glycoprotein gp160</fullName>
    </recommendedName>
    <alternativeName>
        <fullName evidence="1">Env polyprotein</fullName>
    </alternativeName>
    <component>
        <recommendedName>
            <fullName evidence="1">Surface protein gp120</fullName>
            <shortName evidence="1">SU</shortName>
        </recommendedName>
        <alternativeName>
            <fullName evidence="1">Glycoprotein 120</fullName>
            <shortName evidence="1">gp120</shortName>
        </alternativeName>
    </component>
    <component>
        <recommendedName>
            <fullName evidence="1">Transmembrane protein gp41</fullName>
            <shortName evidence="1">TM</shortName>
        </recommendedName>
        <alternativeName>
            <fullName evidence="1">Glycoprotein 41</fullName>
            <shortName evidence="1">gp41</shortName>
        </alternativeName>
    </component>
</protein>
<sequence length="852" mass="97203">MRVKGIKKNYQHLWRWGGMMLLGILMICSATDKLWVTVYYGVPVWKEANTTLFCASDAKAYDTEIHNVWATHACVPTDPNPQELVMGNVTENFNMWKNDMVEQMHEDIISLWDQSLKPCVKLTPLCVTLNCHDFNATNATSNSGKMMEGGEMKNCSFNITTSIRDKMQKEYALFYKLDIVPIDNDKTNTRYRLISCNTSVITQACPKVTFEPIPIHYCAPAGFAILKCNNKKFNGTGPCTNVSTVQCTHGIRPVVSTQLLLNGSLAEEEVVIRSENFTNNVKTIIVQLNESVEINCTRPNNNTRKRITMGPGRVYYTTGQIIGDIRRAHCNLSRSKWENTLKQIVTKLRVQFKNKTIVFNRSSGGDPEIVMHSFNCGGEFFFCNTTQLFNSTWYRNTTGNITEGNSPITLPCRIKQIINMWQEVGKAMYAPPIRGQIKCSSNITGLLLTRDGGNNNETTDTEIFRPGGGNMRDNWRSELYKYKVVKIEPLGVAPTKAKRRVVQREKRAVGLGALFLGFLGAAGSTMGAASLTLTVQARLLLSGIVQQQNNLLMAIEAQQHMLELTVWGIKQLQARVLAVERYLKDQQLLGIWGCSGKLICTTAVPWNASWSNKSLSDIWDNMTWMEWEREIDNYTNLIYSLIEDSQIQQEKNEKELLELDKWASLWNWFNITNWLWYIKIFIMIVGGLIGLRIVFAVLSIVNRVRQGYSPLSFQTRLPGRRGPDRPEGIEEEGGERDRDRSSPLVDGFLALFWVDLRSLFLFSYHRLRDLLLIVTRIVELLGRRGWEVLKYWWNLLQYWSQELKNSAVSLLNATAIAVGERTDRAIEVVQRAFRAILHIPRRIRQGLERALQ</sequence>
<comment type="function">
    <molecule>Envelope glycoprotein gp160</molecule>
    <text evidence="1">Oligomerizes in the host endoplasmic reticulum into predominantly trimers. In a second time, gp160 transits in the host Golgi, where glycosylation is completed. The precursor is then proteolytically cleaved in the trans-Golgi and thereby activated by cellular furin or furin-like proteases to produce gp120 and gp41.</text>
</comment>
<comment type="function">
    <molecule>Surface protein gp120</molecule>
    <text evidence="1">Attaches the virus to the host lymphoid cell by binding to the primary receptor CD4. This interaction induces a structural rearrangement creating a high affinity binding site for a chemokine coreceptor like CXCR4 and/or CCR5. Acts as a ligand for CD209/DC-SIGN and CLEC4M/DC-SIGNR, which are respectively found on dendritic cells (DCs), and on endothelial cells of liver sinusoids and lymph node sinuses. These interactions allow capture of viral particles at mucosal surfaces by these cells and subsequent transmission to permissive cells. HIV subverts the migration properties of dendritic cells to gain access to CD4+ T-cells in lymph nodes. Virus transmission to permissive T-cells occurs either in trans (without DCs infection, through viral capture and transmission), or in cis (following DCs productive infection, through the usual CD4-gp120 interaction), thereby inducing a robust infection. In trans infection, bound virions remain infectious over days and it is proposed that they are not degraded, but protected in non-lysosomal acidic organelles within the DCs close to the cell membrane thus contributing to the viral infectious potential during DCs' migration from the periphery to the lymphoid tissues. On arrival at lymphoid tissues, intact virions recycle back to DCs' cell surface allowing virus transmission to CD4+ T-cells.</text>
</comment>
<comment type="function">
    <molecule>Transmembrane protein gp41</molecule>
    <text evidence="1">Acts as a class I viral fusion protein. Under the current model, the protein has at least 3 conformational states: pre-fusion native state, pre-hairpin intermediate state, and post-fusion hairpin state. During fusion of viral and target intracellular membranes, the coiled coil regions (heptad repeats) assume a trimer-of-hairpins structure, positioning the fusion peptide in close proximity to the C-terminal region of the ectodomain. The formation of this structure appears to drive apposition and subsequent fusion of viral and target cell membranes. Complete fusion occurs in host cell endosomes and is dynamin-dependent, however some lipid transfer might occur at the plasma membrane. The virus undergoes clathrin-dependent internalization long before endosomal fusion, thus minimizing the surface exposure of conserved viral epitopes during fusion and reducing the efficacy of inhibitors targeting these epitopes. Membranes fusion leads to delivery of the nucleocapsid into the cytoplasm.</text>
</comment>
<comment type="subunit">
    <molecule>Surface protein gp120</molecule>
    <text evidence="1">The mature envelope protein (Env) consists of a homotrimer of non-covalently associated gp120-gp41 heterodimers. The resulting complex protrudes from the virus surface as a spike. There seems to be as few as 10 spikes on the average virion. Interacts with host CD4, CCR5 and CXCR4. Gp120 also interacts with the C-type lectins CD209/DC-SIGN and CLEC4M/DC-SIGNR (collectively referred to as DC-SIGN(R)). Gp120 and gp41 interact with GalCer. Gp120 interacts with host ITGA4/ITGB7 complex; on CD4+ T-cells, this interaction results in rapid activation of integrin ITGAL/LFA-1, which facilitates efficient cell-to-cell spreading of HIV-1. Gp120 interacts with cell-associated heparan sulfate; this interaction increases virus infectivity on permissive cells and may be involved in infection of CD4- cells.</text>
</comment>
<comment type="subunit">
    <molecule>Transmembrane protein gp41</molecule>
    <text evidence="1">The mature envelope protein (Env) consists of a homotrimer of non-covalently associated gp120-gp41 heterodimers. The resulting complex protrudes from the virus surface as a spike. There seems to be as few as 10 spikes on the average virion.</text>
</comment>
<comment type="subcellular location">
    <molecule>Surface protein gp120</molecule>
    <subcellularLocation>
        <location evidence="1">Virion membrane</location>
        <topology evidence="1">Peripheral membrane protein</topology>
    </subcellularLocation>
    <subcellularLocation>
        <location evidence="1">Host cell membrane</location>
        <topology evidence="1">Peripheral membrane protein</topology>
    </subcellularLocation>
    <subcellularLocation>
        <location evidence="1">Host endosome membrane</location>
        <topology evidence="1">Single-pass type I membrane protein</topology>
    </subcellularLocation>
    <text evidence="1">The surface protein is not anchored to the viral envelope, but associates with the extravirion surface through its binding to TM. It is probably concentrated at the site of budding and incorporated into the virions possibly by contacts between the cytoplasmic tail of Env and the N-terminus of Gag.</text>
</comment>
<comment type="subcellular location">
    <molecule>Transmembrane protein gp41</molecule>
    <subcellularLocation>
        <location evidence="1">Virion membrane</location>
        <topology evidence="1">Single-pass type I membrane protein</topology>
    </subcellularLocation>
    <subcellularLocation>
        <location evidence="1">Host cell membrane</location>
        <topology evidence="1">Single-pass type I membrane protein</topology>
    </subcellularLocation>
    <subcellularLocation>
        <location evidence="1">Host endosome membrane</location>
        <topology evidence="1">Single-pass type I membrane protein</topology>
    </subcellularLocation>
    <text evidence="1">It is probably concentrated at the site of budding and incorporated into the virions possibly by contacts between the cytoplasmic tail of Env and the N-terminus of Gag.</text>
</comment>
<comment type="domain">
    <text evidence="1">Some of the most genetically diverse regions of the viral genome are present in Env. They are called variable regions 1 through 5 (V1 through V5). Coreceptor usage of gp120 is determined mainly by the primary structure of the third variable region (V3) in the outer domain of gp120. The sequence of V3 determines which coreceptor, CCR5 and/or CXCR4 (corresponding to R5/macrophage, X4/T cell and R5X4/T cell and macrophage tropism), is used to trigger the fusion potential of the Env complex, and hence which cells the virus can infect. Binding to CCR5 involves a region adjacent in addition to V3.</text>
</comment>
<comment type="domain">
    <text evidence="1">The membrane proximal external region (MPER) present in gp41 is a tryptophan-rich region recognized by the antibodies 2F5, Z13, and 4E10. MPER seems to play a role in fusion.</text>
</comment>
<comment type="domain">
    <text evidence="1">The 17 amino acids long immunosuppressive region is present in many retroviral envelope proteins. Synthetic peptides derived from this relatively conserved sequence inhibit immune function in vitro and in vivo.</text>
</comment>
<comment type="domain">
    <text evidence="1">The YXXL motif is involved in determining the exact site of viral release at the surface of infected mononuclear cells and promotes endocytosis. YXXL and di-leucine endocytosis motifs interact directly or indirectly with the clathrin adapter complexes, opperate independently, and their activities are not additive.</text>
</comment>
<comment type="domain">
    <text evidence="1">The CD4-binding region is targeted by the antibody b12.</text>
</comment>
<comment type="PTM">
    <text evidence="1">Highly glycosylated by host. The high number of glycan on the protein is reffered to as 'glycan shield' because it contributes to hide protein sequence from adaptive immune system.</text>
</comment>
<comment type="PTM">
    <text evidence="1">Palmitoylation of the transmembrane protein and of Env polyprotein (prior to its proteolytic cleavage) is essential for their association with host cell membrane lipid rafts. Palmitoylation is therefore required for envelope trafficking to classical lipid rafts, but not for viral replication.</text>
</comment>
<comment type="PTM">
    <text evidence="1">Specific enzymatic cleavages in vivo yield mature proteins. Envelope glycoproteins are synthesized as an inactive precursor that is heavily N-glycosylated and processed likely by host cell furin in the Golgi to yield the mature SU and TM proteins. The cleavage site between SU and TM requires the minimal sequence [KR]-X-[KR]-R. About 2 of the 9 disulfide bonds of gp41 are reduced by P4HB/PDI, following binding to CD4 receptor.</text>
</comment>
<comment type="miscellaneous">
    <text evidence="1">Inhibitors targeting HIV-1 viral envelope proteins are used as antiretroviral drugs. Attachment of virions to the cell surface via non-specific interactions and CD4 binding can be blocked by inhibitors that include cyanovirin-N, cyclotriazadisulfonamide analogs, PRO 2000, TNX 355 and PRO 542. In addition, BMS 806 can block CD4-induced conformational changes. Env interactions with the coreceptor molecules can be targeted by CCR5 antagonists including SCH-D, maraviroc (UK 427857) and aplaviroc (GW 873140), and the CXCR4 antagonist AMD 070. Fusion of viral and cellular membranes can be inhibited by peptides such as enfuvirtide and tifuvirtide (T 1249). Resistance to inhibitors associated with mutations in Env are observed. Most of the time, single mutations confer only a modest reduction in drug susceptibility. Combination of several mutations is usually required to develop a high-level drug resistance.</text>
</comment>
<comment type="miscellaneous">
    <text evidence="1">HIV-1 lineages are divided in three main groups, M (for Major), O (for Outlier), and N (for New, or Non-M, Non-O). The vast majority of strains found worldwide belong to the group M. Group O seems to be endemic to and largely confined to Cameroon and neighboring countries in West Central Africa, where these viruses represent a small minority of HIV-1 strains. The group N is represented by a limited number of isolates from Cameroonian persons. The group M is further subdivided in 9 clades or subtypes (A to D, F to H, J and K).</text>
</comment>
<comment type="similarity">
    <text evidence="1">Belongs to the HIV-1 env protein family.</text>
</comment>
<comment type="online information" name="hivdb">
    <link uri="https://hivdb.stanford.edu"/>
    <text>HIV drug resistance database</text>
</comment>
<comment type="online information" name="HIV drug resistance mutations">
    <link uri="https://www.iasusa.org/hiv-drug-resistance/hiv-drug-resistance-mutations/"/>
</comment>